<evidence type="ECO:0000255" key="1">
    <source>
        <dbReference type="HAMAP-Rule" id="MF_00636"/>
    </source>
</evidence>
<feature type="chain" id="PRO_1000130735" description="Nucleotide-binding protein Bcenmc03_2806">
    <location>
        <begin position="1"/>
        <end position="302"/>
    </location>
</feature>
<feature type="binding site" evidence="1">
    <location>
        <begin position="8"/>
        <end position="15"/>
    </location>
    <ligand>
        <name>ATP</name>
        <dbReference type="ChEBI" id="CHEBI:30616"/>
    </ligand>
</feature>
<feature type="binding site" evidence="1">
    <location>
        <begin position="57"/>
        <end position="60"/>
    </location>
    <ligand>
        <name>GTP</name>
        <dbReference type="ChEBI" id="CHEBI:37565"/>
    </ligand>
</feature>
<reference key="1">
    <citation type="submission" date="2008-02" db="EMBL/GenBank/DDBJ databases">
        <title>Complete sequence of chromosome 1 of Burkholderia cenocepacia MC0-3.</title>
        <authorList>
            <person name="Copeland A."/>
            <person name="Lucas S."/>
            <person name="Lapidus A."/>
            <person name="Barry K."/>
            <person name="Bruce D."/>
            <person name="Goodwin L."/>
            <person name="Glavina del Rio T."/>
            <person name="Dalin E."/>
            <person name="Tice H."/>
            <person name="Pitluck S."/>
            <person name="Chain P."/>
            <person name="Malfatti S."/>
            <person name="Shin M."/>
            <person name="Vergez L."/>
            <person name="Schmutz J."/>
            <person name="Larimer F."/>
            <person name="Land M."/>
            <person name="Hauser L."/>
            <person name="Kyrpides N."/>
            <person name="Mikhailova N."/>
            <person name="Tiedje J."/>
            <person name="Richardson P."/>
        </authorList>
    </citation>
    <scope>NUCLEOTIDE SEQUENCE [LARGE SCALE GENOMIC DNA]</scope>
    <source>
        <strain>MC0-3</strain>
    </source>
</reference>
<dbReference type="EMBL" id="CP000958">
    <property type="protein sequence ID" value="ACA91965.1"/>
    <property type="molecule type" value="Genomic_DNA"/>
</dbReference>
<dbReference type="SMR" id="B1JYP2"/>
<dbReference type="GeneID" id="83049590"/>
<dbReference type="KEGG" id="bcm:Bcenmc03_2806"/>
<dbReference type="HOGENOM" id="CLU_059558_1_1_4"/>
<dbReference type="Proteomes" id="UP000002169">
    <property type="component" value="Chromosome 1"/>
</dbReference>
<dbReference type="GO" id="GO:0005524">
    <property type="term" value="F:ATP binding"/>
    <property type="evidence" value="ECO:0007669"/>
    <property type="project" value="UniProtKB-UniRule"/>
</dbReference>
<dbReference type="GO" id="GO:0005525">
    <property type="term" value="F:GTP binding"/>
    <property type="evidence" value="ECO:0007669"/>
    <property type="project" value="UniProtKB-UniRule"/>
</dbReference>
<dbReference type="Gene3D" id="3.40.50.300">
    <property type="entry name" value="P-loop containing nucleotide triphosphate hydrolases"/>
    <property type="match status" value="1"/>
</dbReference>
<dbReference type="HAMAP" id="MF_00636">
    <property type="entry name" value="RapZ_like"/>
    <property type="match status" value="1"/>
</dbReference>
<dbReference type="InterPro" id="IPR027417">
    <property type="entry name" value="P-loop_NTPase"/>
</dbReference>
<dbReference type="InterPro" id="IPR005337">
    <property type="entry name" value="RapZ-like"/>
</dbReference>
<dbReference type="InterPro" id="IPR053930">
    <property type="entry name" value="RapZ-like_N"/>
</dbReference>
<dbReference type="InterPro" id="IPR053931">
    <property type="entry name" value="RapZ_C"/>
</dbReference>
<dbReference type="NCBIfam" id="NF003828">
    <property type="entry name" value="PRK05416.1"/>
    <property type="match status" value="1"/>
</dbReference>
<dbReference type="PANTHER" id="PTHR30448">
    <property type="entry name" value="RNASE ADAPTER PROTEIN RAPZ"/>
    <property type="match status" value="1"/>
</dbReference>
<dbReference type="PANTHER" id="PTHR30448:SF0">
    <property type="entry name" value="RNASE ADAPTER PROTEIN RAPZ"/>
    <property type="match status" value="1"/>
</dbReference>
<dbReference type="Pfam" id="PF22740">
    <property type="entry name" value="PapZ_C"/>
    <property type="match status" value="1"/>
</dbReference>
<dbReference type="Pfam" id="PF03668">
    <property type="entry name" value="RapZ-like_N"/>
    <property type="match status" value="1"/>
</dbReference>
<dbReference type="PIRSF" id="PIRSF005052">
    <property type="entry name" value="P-loopkin"/>
    <property type="match status" value="1"/>
</dbReference>
<dbReference type="SUPFAM" id="SSF52540">
    <property type="entry name" value="P-loop containing nucleoside triphosphate hydrolases"/>
    <property type="match status" value="1"/>
</dbReference>
<accession>B1JYP2</accession>
<proteinExistence type="inferred from homology"/>
<protein>
    <recommendedName>
        <fullName evidence="1">Nucleotide-binding protein Bcenmc03_2806</fullName>
    </recommendedName>
</protein>
<organism>
    <name type="scientific">Burkholderia orbicola (strain MC0-3)</name>
    <dbReference type="NCBI Taxonomy" id="406425"/>
    <lineage>
        <taxon>Bacteria</taxon>
        <taxon>Pseudomonadati</taxon>
        <taxon>Pseudomonadota</taxon>
        <taxon>Betaproteobacteria</taxon>
        <taxon>Burkholderiales</taxon>
        <taxon>Burkholderiaceae</taxon>
        <taxon>Burkholderia</taxon>
        <taxon>Burkholderia cepacia complex</taxon>
        <taxon>Burkholderia orbicola</taxon>
    </lineage>
</organism>
<gene>
    <name type="ordered locus">Bcenmc03_2806</name>
</gene>
<sequence length="302" mass="33909">MRIVLITGISGSGKSVALNALEDAGYYCVDNLPPHVLPELARYLAQDGQRRLAVAIDARSSASLDEMPGLIRELSREHDVRVLFLNASTQALIQRFSETRRRHPLSGSRSHDADVGLLSSLEEAIERERELVAPLAEFGHQIDTSTLRANALRTWVKRFIEQKNNDLMVMFESFGFKRGVPLDADLMFDVRALPNPYYDHQLRPLTGLDQPVIAFLDALPIVHQMIDDIHAFLMKWLPHFRDDNRSYLTVAIGCTGGQHRSVFIAETLAARLARDANVIVRHRDAPVDVDASSRLVSEVDRP</sequence>
<keyword id="KW-0067">ATP-binding</keyword>
<keyword id="KW-0342">GTP-binding</keyword>
<keyword id="KW-0547">Nucleotide-binding</keyword>
<name>Y2806_BURO0</name>
<comment type="function">
    <text evidence="1">Displays ATPase and GTPase activities.</text>
</comment>
<comment type="similarity">
    <text evidence="1">Belongs to the RapZ-like family.</text>
</comment>